<evidence type="ECO:0000255" key="1">
    <source>
        <dbReference type="HAMAP-Rule" id="MF_00094"/>
    </source>
</evidence>
<comment type="function">
    <text evidence="1">Peptide chain release factor 2 directs the termination of translation in response to the peptide chain termination codons UGA and UAA.</text>
</comment>
<comment type="subcellular location">
    <subcellularLocation>
        <location evidence="1">Cytoplasm</location>
    </subcellularLocation>
</comment>
<comment type="PTM">
    <text evidence="1">Methylated by PrmC. Methylation increases the termination efficiency of RF2.</text>
</comment>
<comment type="similarity">
    <text evidence="1">Belongs to the prokaryotic/mitochondrial release factor family.</text>
</comment>
<sequence length="366" mass="41208">MDSYEYNELLKKLQTKVENIGSIVKPDDIKARLKEIEAIEQDPDFWQDIARAGALNKEKTKISNMLAKFSDANQAVSDAKELFELANSENDEETINSLFEDAKNLDEKIVNLEISMLLSGEDDGKNAIVSIHPGAGGTESNDWASMLYRMYLRFCEREGFKVETLDFQEGEEAGLKDVSFIVKGENAYGYFKAENGIHRLVRTSPFDSAGRRHTSFSSVMVSPEVDDDIEIEIEEKDLKIDTYRASGAGGQHVNKTESAIRITHIPTGIVVQCQNDRSQHKNRATAMKMLKSRLYELELMKQQEASNSVEKSEIGWGHQIRSYVLFPYQQVKDNRSGEAYSQTDAILDGDIKKMIEGVLIAQKAEA</sequence>
<protein>
    <recommendedName>
        <fullName evidence="1">Peptide chain release factor 2</fullName>
        <shortName evidence="1">RF-2</shortName>
    </recommendedName>
</protein>
<reference key="1">
    <citation type="submission" date="2007-10" db="EMBL/GenBank/DDBJ databases">
        <title>Genome sequence of Campylobacter concisus 13826 isolated from human feces.</title>
        <authorList>
            <person name="Fouts D.E."/>
            <person name="Mongodin E.F."/>
            <person name="Puiu D."/>
            <person name="Sebastian Y."/>
            <person name="Miller W.G."/>
            <person name="Mandrell R.E."/>
            <person name="On S."/>
            <person name="Nelson K.E."/>
        </authorList>
    </citation>
    <scope>NUCLEOTIDE SEQUENCE [LARGE SCALE GENOMIC DNA]</scope>
    <source>
        <strain>13826</strain>
    </source>
</reference>
<name>RF2_CAMC1</name>
<dbReference type="EMBL" id="CP000792">
    <property type="protein sequence ID" value="EAT97380.1"/>
    <property type="molecule type" value="Genomic_DNA"/>
</dbReference>
<dbReference type="RefSeq" id="WP_012139950.1">
    <property type="nucleotide sequence ID" value="NC_009802.2"/>
</dbReference>
<dbReference type="SMR" id="A7ZE19"/>
<dbReference type="STRING" id="360104.CCC13826_0584"/>
<dbReference type="KEGG" id="cco:CCC13826_0584"/>
<dbReference type="eggNOG" id="COG1186">
    <property type="taxonomic scope" value="Bacteria"/>
</dbReference>
<dbReference type="HOGENOM" id="CLU_036856_6_0_7"/>
<dbReference type="OrthoDB" id="9806673at2"/>
<dbReference type="Proteomes" id="UP000001121">
    <property type="component" value="Chromosome"/>
</dbReference>
<dbReference type="GO" id="GO:0005737">
    <property type="term" value="C:cytoplasm"/>
    <property type="evidence" value="ECO:0007669"/>
    <property type="project" value="UniProtKB-SubCell"/>
</dbReference>
<dbReference type="GO" id="GO:0016149">
    <property type="term" value="F:translation release factor activity, codon specific"/>
    <property type="evidence" value="ECO:0007669"/>
    <property type="project" value="UniProtKB-UniRule"/>
</dbReference>
<dbReference type="FunFam" id="3.30.160.20:FF:000010">
    <property type="entry name" value="Peptide chain release factor 2"/>
    <property type="match status" value="1"/>
</dbReference>
<dbReference type="Gene3D" id="3.30.160.20">
    <property type="match status" value="1"/>
</dbReference>
<dbReference type="Gene3D" id="3.30.70.1660">
    <property type="match status" value="1"/>
</dbReference>
<dbReference type="Gene3D" id="1.20.58.410">
    <property type="entry name" value="Release factor"/>
    <property type="match status" value="1"/>
</dbReference>
<dbReference type="HAMAP" id="MF_00094">
    <property type="entry name" value="Rel_fac_2"/>
    <property type="match status" value="1"/>
</dbReference>
<dbReference type="InterPro" id="IPR005139">
    <property type="entry name" value="PCRF"/>
</dbReference>
<dbReference type="InterPro" id="IPR000352">
    <property type="entry name" value="Pep_chain_release_fac_I"/>
</dbReference>
<dbReference type="InterPro" id="IPR045853">
    <property type="entry name" value="Pep_chain_release_fac_I_sf"/>
</dbReference>
<dbReference type="InterPro" id="IPR004374">
    <property type="entry name" value="PrfB"/>
</dbReference>
<dbReference type="NCBIfam" id="TIGR00020">
    <property type="entry name" value="prfB"/>
    <property type="match status" value="1"/>
</dbReference>
<dbReference type="PANTHER" id="PTHR43116:SF3">
    <property type="entry name" value="CLASS I PEPTIDE CHAIN RELEASE FACTOR"/>
    <property type="match status" value="1"/>
</dbReference>
<dbReference type="PANTHER" id="PTHR43116">
    <property type="entry name" value="PEPTIDE CHAIN RELEASE FACTOR 2"/>
    <property type="match status" value="1"/>
</dbReference>
<dbReference type="Pfam" id="PF03462">
    <property type="entry name" value="PCRF"/>
    <property type="match status" value="1"/>
</dbReference>
<dbReference type="Pfam" id="PF00472">
    <property type="entry name" value="RF-1"/>
    <property type="match status" value="1"/>
</dbReference>
<dbReference type="SMART" id="SM00937">
    <property type="entry name" value="PCRF"/>
    <property type="match status" value="1"/>
</dbReference>
<dbReference type="SUPFAM" id="SSF75620">
    <property type="entry name" value="Release factor"/>
    <property type="match status" value="1"/>
</dbReference>
<dbReference type="PROSITE" id="PS00745">
    <property type="entry name" value="RF_PROK_I"/>
    <property type="match status" value="1"/>
</dbReference>
<accession>A7ZE19</accession>
<keyword id="KW-0963">Cytoplasm</keyword>
<keyword id="KW-0488">Methylation</keyword>
<keyword id="KW-0648">Protein biosynthesis</keyword>
<gene>
    <name evidence="1" type="primary">prfB</name>
    <name type="ordered locus">Ccon26_11710</name>
    <name type="ORF">CCC13826_0584</name>
</gene>
<organism>
    <name type="scientific">Campylobacter concisus (strain 13826)</name>
    <dbReference type="NCBI Taxonomy" id="360104"/>
    <lineage>
        <taxon>Bacteria</taxon>
        <taxon>Pseudomonadati</taxon>
        <taxon>Campylobacterota</taxon>
        <taxon>Epsilonproteobacteria</taxon>
        <taxon>Campylobacterales</taxon>
        <taxon>Campylobacteraceae</taxon>
        <taxon>Campylobacter</taxon>
    </lineage>
</organism>
<feature type="chain" id="PRO_1000004978" description="Peptide chain release factor 2">
    <location>
        <begin position="1"/>
        <end position="366"/>
    </location>
</feature>
<feature type="modified residue" description="N5-methylglutamine" evidence="1">
    <location>
        <position position="251"/>
    </location>
</feature>
<proteinExistence type="inferred from homology"/>